<protein>
    <recommendedName>
        <fullName evidence="5">5-oxoprolinase PfmaA</fullName>
        <ecNumber evidence="7">3.5.2.9</ecNumber>
    </recommendedName>
    <alternativeName>
        <fullName evidence="5">Conidial pigment biosynthesis cluster protein A</fullName>
    </alternativeName>
</protein>
<evidence type="ECO:0000250" key="1">
    <source>
        <dbReference type="UniProtKB" id="P28273"/>
    </source>
</evidence>
<evidence type="ECO:0000256" key="2">
    <source>
        <dbReference type="SAM" id="MobiDB-lite"/>
    </source>
</evidence>
<evidence type="ECO:0000269" key="3">
    <source>
    </source>
</evidence>
<evidence type="ECO:0000269" key="4">
    <source>
    </source>
</evidence>
<evidence type="ECO:0000303" key="5">
    <source>
    </source>
</evidence>
<evidence type="ECO:0000305" key="6"/>
<evidence type="ECO:0000305" key="7">
    <source>
    </source>
</evidence>
<evidence type="ECO:0000305" key="8">
    <source>
    </source>
</evidence>
<feature type="chain" id="PRO_0000445349" description="5-oxoprolinase PfmaA">
    <location>
        <begin position="1"/>
        <end position="1283"/>
    </location>
</feature>
<feature type="region of interest" description="Disordered" evidence="2">
    <location>
        <begin position="1256"/>
        <end position="1283"/>
    </location>
</feature>
<feature type="compositionally biased region" description="Basic and acidic residues" evidence="2">
    <location>
        <begin position="1266"/>
        <end position="1277"/>
    </location>
</feature>
<gene>
    <name evidence="5" type="primary">PfmaA</name>
    <name type="ORF">PFICI_07097</name>
</gene>
<reference key="1">
    <citation type="journal article" date="2015" name="BMC Genomics">
        <title>Genomic and transcriptomic analysis of the endophytic fungus Pestalotiopsis fici reveals its lifestyle and high potential for synthesis of natural products.</title>
        <authorList>
            <person name="Wang X."/>
            <person name="Zhang X."/>
            <person name="Liu L."/>
            <person name="Xiang M."/>
            <person name="Wang W."/>
            <person name="Sun X."/>
            <person name="Che Y."/>
            <person name="Guo L."/>
            <person name="Liu G."/>
            <person name="Guo L."/>
            <person name="Wang C."/>
            <person name="Yin W.B."/>
            <person name="Stadler M."/>
            <person name="Zhang X."/>
            <person name="Liu X."/>
        </authorList>
    </citation>
    <scope>NUCLEOTIDE SEQUENCE [LARGE SCALE GENOMIC DNA]</scope>
    <source>
        <strain>W106-1 / CGMCC3.15140</strain>
    </source>
</reference>
<reference key="2">
    <citation type="journal article" date="2017" name="Mol. Microbiol.">
        <title>A cryptic pigment biosynthetic pathway uncovered by heterologous expression is essential for conidial development in Pestalotiopsis fici.</title>
        <authorList>
            <person name="Zhang P."/>
            <person name="Wang X."/>
            <person name="Fan A."/>
            <person name="Zheng Y."/>
            <person name="Liu X."/>
            <person name="Wang S."/>
            <person name="Zou H."/>
            <person name="Oakley B.R."/>
            <person name="Keller N.P."/>
            <person name="Yin W.B."/>
        </authorList>
    </citation>
    <scope>FUNCTION</scope>
    <scope>DISRUPTION PHENOTYPE</scope>
</reference>
<reference key="3">
    <citation type="journal article" date="2019" name="Mol. Microbiol.">
        <title>Two transcription factors cooperatively regulate DHN melanin biosynthesis and development in Pestalotiopsis fici.</title>
        <authorList>
            <person name="Zhang P."/>
            <person name="Zhou S."/>
            <person name="Wang G."/>
            <person name="An Z."/>
            <person name="Liu X."/>
            <person name="Li K."/>
            <person name="Yin W.B."/>
        </authorList>
    </citation>
    <scope>FUNCTION</scope>
</reference>
<name>PFMAA_PESFW</name>
<organism>
    <name type="scientific">Pestalotiopsis fici (strain W106-1 / CGMCC3.15140)</name>
    <dbReference type="NCBI Taxonomy" id="1229662"/>
    <lineage>
        <taxon>Eukaryota</taxon>
        <taxon>Fungi</taxon>
        <taxon>Dikarya</taxon>
        <taxon>Ascomycota</taxon>
        <taxon>Pezizomycotina</taxon>
        <taxon>Sordariomycetes</taxon>
        <taxon>Xylariomycetidae</taxon>
        <taxon>Amphisphaeriales</taxon>
        <taxon>Sporocadaceae</taxon>
        <taxon>Pestalotiopsis</taxon>
    </lineage>
</organism>
<comment type="function">
    <text evidence="3 4 7 8">5-oxoprolinase; part of the gene cluster that mediates the biosynthesis of dihydroxynaphthalene (DHN)-melanin, a bluish-green pigment forming a dark layer in the conidial wall that protects the conidia from UV radiations (PubMed:28517364). The first step of the pathway is the production of the pentaketide 1,3,6,8-tetrahydroxynaphthalene (1,3,6,8-THN or T4HN) by the polyketide synthase PfmaE though condensation of acetyl-CoA with malonyl-CoA. T4HN is not stable and easily oxidizes into the stable form flaviolin (PubMed:28517364). T4HN is also substrate of the hydroxynaphthalene reductase PfmaG to yield scytalone (PubMed:28517364). The scytalone dehydratase PfmaJ then reduces scytalone to 1,3,8-THN (PubMed:31116900). 1,3,8-THN is then substrate of the hydroxynaphthalene reductase PfmaI to yield vermelone (Probable). Vermelone is further converted by the multicopper oxidase PfmaD to 1,8-DHN (Probable). Finally the laccase PFICI_06862 transforms 1,8-DHN to DHN-melanin (Probable). The roles of the 5-oxoprolinase PfmaA and the proline iminopeptidase PfmaB within the cluster have not been elucidated yet (Probable).</text>
</comment>
<comment type="catalytic activity">
    <reaction evidence="7">
        <text>5-oxo-L-proline + ATP + 2 H2O = L-glutamate + ADP + phosphate + H(+)</text>
        <dbReference type="Rhea" id="RHEA:10348"/>
        <dbReference type="ChEBI" id="CHEBI:15377"/>
        <dbReference type="ChEBI" id="CHEBI:15378"/>
        <dbReference type="ChEBI" id="CHEBI:29985"/>
        <dbReference type="ChEBI" id="CHEBI:30616"/>
        <dbReference type="ChEBI" id="CHEBI:43474"/>
        <dbReference type="ChEBI" id="CHEBI:58402"/>
        <dbReference type="ChEBI" id="CHEBI:456216"/>
        <dbReference type="EC" id="3.5.2.9"/>
    </reaction>
</comment>
<comment type="subunit">
    <text evidence="1">Homodimer.</text>
</comment>
<comment type="disruption phenotype">
    <text evidence="3">Does not affect the production of scytalone.</text>
</comment>
<comment type="similarity">
    <text evidence="6">Belongs to the oxoprolinase family.</text>
</comment>
<accession>W3X7R6</accession>
<dbReference type="EC" id="3.5.2.9" evidence="7"/>
<dbReference type="EMBL" id="KI912112">
    <property type="protein sequence ID" value="ETS82095.1"/>
    <property type="molecule type" value="Genomic_DNA"/>
</dbReference>
<dbReference type="RefSeq" id="XP_007833869.1">
    <property type="nucleotide sequence ID" value="XM_007835678.1"/>
</dbReference>
<dbReference type="SMR" id="W3X7R6"/>
<dbReference type="STRING" id="1229662.W3X7R6"/>
<dbReference type="GeneID" id="19272110"/>
<dbReference type="KEGG" id="pfy:PFICI_07097"/>
<dbReference type="eggNOG" id="KOG1939">
    <property type="taxonomic scope" value="Eukaryota"/>
</dbReference>
<dbReference type="HOGENOM" id="CLU_002157_0_0_1"/>
<dbReference type="InParanoid" id="W3X7R6"/>
<dbReference type="OMA" id="GTGPQMW"/>
<dbReference type="OrthoDB" id="3643at2759"/>
<dbReference type="Proteomes" id="UP000030651">
    <property type="component" value="Unassembled WGS sequence"/>
</dbReference>
<dbReference type="GO" id="GO:0005829">
    <property type="term" value="C:cytosol"/>
    <property type="evidence" value="ECO:0007669"/>
    <property type="project" value="TreeGrafter"/>
</dbReference>
<dbReference type="GO" id="GO:0017168">
    <property type="term" value="F:5-oxoprolinase (ATP-hydrolyzing) activity"/>
    <property type="evidence" value="ECO:0007669"/>
    <property type="project" value="UniProtKB-EC"/>
</dbReference>
<dbReference type="GO" id="GO:0005524">
    <property type="term" value="F:ATP binding"/>
    <property type="evidence" value="ECO:0007669"/>
    <property type="project" value="UniProtKB-KW"/>
</dbReference>
<dbReference type="GO" id="GO:0006749">
    <property type="term" value="P:glutathione metabolic process"/>
    <property type="evidence" value="ECO:0007669"/>
    <property type="project" value="TreeGrafter"/>
</dbReference>
<dbReference type="GO" id="GO:0042438">
    <property type="term" value="P:melanin biosynthetic process"/>
    <property type="evidence" value="ECO:0007669"/>
    <property type="project" value="UniProtKB-KW"/>
</dbReference>
<dbReference type="InterPro" id="IPR049517">
    <property type="entry name" value="ACX-like_C"/>
</dbReference>
<dbReference type="InterPro" id="IPR008040">
    <property type="entry name" value="Hydant_A_N"/>
</dbReference>
<dbReference type="InterPro" id="IPR002821">
    <property type="entry name" value="Hydantoinase_A"/>
</dbReference>
<dbReference type="InterPro" id="IPR003692">
    <property type="entry name" value="Hydantoinase_B"/>
</dbReference>
<dbReference type="InterPro" id="IPR045079">
    <property type="entry name" value="Oxoprolinase-like"/>
</dbReference>
<dbReference type="PANTHER" id="PTHR11365:SF2">
    <property type="entry name" value="5-OXOPROLINASE"/>
    <property type="match status" value="1"/>
</dbReference>
<dbReference type="PANTHER" id="PTHR11365">
    <property type="entry name" value="5-OXOPROLINASE RELATED"/>
    <property type="match status" value="1"/>
</dbReference>
<dbReference type="Pfam" id="PF19278">
    <property type="entry name" value="Hydant_A_C"/>
    <property type="match status" value="1"/>
</dbReference>
<dbReference type="Pfam" id="PF05378">
    <property type="entry name" value="Hydant_A_N"/>
    <property type="match status" value="1"/>
</dbReference>
<dbReference type="Pfam" id="PF01968">
    <property type="entry name" value="Hydantoinase_A"/>
    <property type="match status" value="1"/>
</dbReference>
<dbReference type="Pfam" id="PF02538">
    <property type="entry name" value="Hydantoinase_B"/>
    <property type="match status" value="1"/>
</dbReference>
<proteinExistence type="inferred from homology"/>
<sequence>MTADIRVSIDRGGTFCDVIAHVEGREPIIFKLLSVDPANYQDAPTEGIRRVLEIVEGKKIPVGEKLDGTRIASCRLGTTVATNALLEGKYEKFALVTTKGFEDVCVIGDQSRPKLFDLKVKKAEALHDTVIGVDERVTIEDYDLNPYPLDKSASLNDPDLVRTPSGEIIRILARVNEETVREQLLALRDAGYNSVAISFMHSYIFPDHEDQVAKIAREVGFTYVTTSAETRPVLKYLNRSTSCCSEACLYPVIRRYIENFESGFRVLPRRVDFMCSDGGLKQSQKFRGNEALLSGPAGGVVGIATSCYDVEQKIPIIGFDMGGTSTDVSRFDGKYDYLSETVIADRTISMPMLNISTVAAGGGSILFARSGLLVVGPESAGAHPGPACYRKGGPLTVTDANLFLGRLVVSSFPSIFGENADQPLDQDVVTAKFQEITADFNSQTSQNLTAEEVALGFLDVANEAMSRPIRNTTEARGFAPEKHNLVSFGGAGGQHACAIASKLGIKRVLIHKWSSLLSAHGISQADLQYESFEPLSLDFGMDLNGFIKERLSLLREKVAAGLLAQGAQESTLRFDESLVMKYFGTDTTITVTTPDDLDYGAAFEALHLREFAFKLNRKIVIDSVNVRGTGSAVTLATEEPPLKALARVKSVATTAQTTEEQKVYINGSWRKVPIYRLDQLSKGCAVSGPAMIIDKTQTIFVEPRFNAYILPDHVILEESNVEDTVTRQAVSAEEINPLLLSVFAHRFMSIAEQMGNTLQRTSVSSSIKERLDFSCAIFSREGKLVANAPHIPIHLGSMQMAIRYQHEAWKGKLKPGDALVTNHPLSGGTHLPDLTVVSPVFVNGDVAFYVASRGHHTDIGGKGIAAMMPESKELWEEGISIKTMKIVSGGEFLEDEIRAAFDKAGSFPGCSPTRRIADNLSDLKAQIASNQRGIILLGNLCEEFTLPVVCTYMEGIQANAEFAVRRFLKQLAKKHPEPLTAIDYFDDGTPIKIKIIIDPETGGAVYDFSGTGPQQWGNYNCPISITHSAIIYTLRCLVDVDIPLNEGCLTPIDIRVPYGSMLNPSPAVAICGSTLASQRVIDTILRAFRRCAASQGCASSFSWGMGGRDPETGKVLPGWNYGESLGGGVGALPGYHGESAINVHSTNTRNTDPEVVEKRTAVLVTKYAVRKGSGGRGQWRGGDGVTREIQARIPLKFSILSDRRVYRPYGMEGGEAGHRGQNYVFKFNQEGTGFEQINLGGKAVVVLNPGEKMQINTPGGGAWGKPEGDADGYREEDQAGDGI</sequence>
<keyword id="KW-0067">ATP-binding</keyword>
<keyword id="KW-0378">Hydrolase</keyword>
<keyword id="KW-0470">Melanin biosynthesis</keyword>
<keyword id="KW-0547">Nucleotide-binding</keyword>
<keyword id="KW-1185">Reference proteome</keyword>